<accession>Q8PKS4</accession>
<name>LPXK_XANAC</name>
<gene>
    <name evidence="1" type="primary">lpxK</name>
    <name type="ordered locus">XAC2088</name>
</gene>
<dbReference type="EC" id="2.7.1.130" evidence="1"/>
<dbReference type="EMBL" id="AE008923">
    <property type="protein sequence ID" value="AAM36945.1"/>
    <property type="molecule type" value="Genomic_DNA"/>
</dbReference>
<dbReference type="RefSeq" id="WP_011051325.1">
    <property type="nucleotide sequence ID" value="NC_003919.1"/>
</dbReference>
<dbReference type="SMR" id="Q8PKS4"/>
<dbReference type="GeneID" id="66911223"/>
<dbReference type="KEGG" id="xac:XAC2088"/>
<dbReference type="eggNOG" id="COG1663">
    <property type="taxonomic scope" value="Bacteria"/>
</dbReference>
<dbReference type="HOGENOM" id="CLU_038816_2_0_6"/>
<dbReference type="UniPathway" id="UPA00359">
    <property type="reaction ID" value="UER00482"/>
</dbReference>
<dbReference type="Proteomes" id="UP000000576">
    <property type="component" value="Chromosome"/>
</dbReference>
<dbReference type="GO" id="GO:0005886">
    <property type="term" value="C:plasma membrane"/>
    <property type="evidence" value="ECO:0007669"/>
    <property type="project" value="TreeGrafter"/>
</dbReference>
<dbReference type="GO" id="GO:0005524">
    <property type="term" value="F:ATP binding"/>
    <property type="evidence" value="ECO:0007669"/>
    <property type="project" value="UniProtKB-UniRule"/>
</dbReference>
<dbReference type="GO" id="GO:0009029">
    <property type="term" value="F:tetraacyldisaccharide 4'-kinase activity"/>
    <property type="evidence" value="ECO:0007669"/>
    <property type="project" value="UniProtKB-UniRule"/>
</dbReference>
<dbReference type="GO" id="GO:0009245">
    <property type="term" value="P:lipid A biosynthetic process"/>
    <property type="evidence" value="ECO:0007669"/>
    <property type="project" value="UniProtKB-UniRule"/>
</dbReference>
<dbReference type="GO" id="GO:0009244">
    <property type="term" value="P:lipopolysaccharide core region biosynthetic process"/>
    <property type="evidence" value="ECO:0007669"/>
    <property type="project" value="TreeGrafter"/>
</dbReference>
<dbReference type="HAMAP" id="MF_00409">
    <property type="entry name" value="LpxK"/>
    <property type="match status" value="1"/>
</dbReference>
<dbReference type="InterPro" id="IPR003758">
    <property type="entry name" value="LpxK"/>
</dbReference>
<dbReference type="InterPro" id="IPR027417">
    <property type="entry name" value="P-loop_NTPase"/>
</dbReference>
<dbReference type="NCBIfam" id="TIGR00682">
    <property type="entry name" value="lpxK"/>
    <property type="match status" value="1"/>
</dbReference>
<dbReference type="PANTHER" id="PTHR42724">
    <property type="entry name" value="TETRAACYLDISACCHARIDE 4'-KINASE"/>
    <property type="match status" value="1"/>
</dbReference>
<dbReference type="PANTHER" id="PTHR42724:SF1">
    <property type="entry name" value="TETRAACYLDISACCHARIDE 4'-KINASE, MITOCHONDRIAL-RELATED"/>
    <property type="match status" value="1"/>
</dbReference>
<dbReference type="Pfam" id="PF02606">
    <property type="entry name" value="LpxK"/>
    <property type="match status" value="1"/>
</dbReference>
<dbReference type="SUPFAM" id="SSF52540">
    <property type="entry name" value="P-loop containing nucleoside triphosphate hydrolases"/>
    <property type="match status" value="1"/>
</dbReference>
<evidence type="ECO:0000255" key="1">
    <source>
        <dbReference type="HAMAP-Rule" id="MF_00409"/>
    </source>
</evidence>
<reference key="1">
    <citation type="journal article" date="2002" name="Nature">
        <title>Comparison of the genomes of two Xanthomonas pathogens with differing host specificities.</title>
        <authorList>
            <person name="da Silva A.C.R."/>
            <person name="Ferro J.A."/>
            <person name="Reinach F.C."/>
            <person name="Farah C.S."/>
            <person name="Furlan L.R."/>
            <person name="Quaggio R.B."/>
            <person name="Monteiro-Vitorello C.B."/>
            <person name="Van Sluys M.A."/>
            <person name="Almeida N.F. Jr."/>
            <person name="Alves L.M.C."/>
            <person name="do Amaral A.M."/>
            <person name="Bertolini M.C."/>
            <person name="Camargo L.E.A."/>
            <person name="Camarotte G."/>
            <person name="Cannavan F."/>
            <person name="Cardozo J."/>
            <person name="Chambergo F."/>
            <person name="Ciapina L.P."/>
            <person name="Cicarelli R.M.B."/>
            <person name="Coutinho L.L."/>
            <person name="Cursino-Santos J.R."/>
            <person name="El-Dorry H."/>
            <person name="Faria J.B."/>
            <person name="Ferreira A.J.S."/>
            <person name="Ferreira R.C.C."/>
            <person name="Ferro M.I.T."/>
            <person name="Formighieri E.F."/>
            <person name="Franco M.C."/>
            <person name="Greggio C.C."/>
            <person name="Gruber A."/>
            <person name="Katsuyama A.M."/>
            <person name="Kishi L.T."/>
            <person name="Leite R.P."/>
            <person name="Lemos E.G.M."/>
            <person name="Lemos M.V.F."/>
            <person name="Locali E.C."/>
            <person name="Machado M.A."/>
            <person name="Madeira A.M.B.N."/>
            <person name="Martinez-Rossi N.M."/>
            <person name="Martins E.C."/>
            <person name="Meidanis J."/>
            <person name="Menck C.F.M."/>
            <person name="Miyaki C.Y."/>
            <person name="Moon D.H."/>
            <person name="Moreira L.M."/>
            <person name="Novo M.T.M."/>
            <person name="Okura V.K."/>
            <person name="Oliveira M.C."/>
            <person name="Oliveira V.R."/>
            <person name="Pereira H.A."/>
            <person name="Rossi A."/>
            <person name="Sena J.A.D."/>
            <person name="Silva C."/>
            <person name="de Souza R.F."/>
            <person name="Spinola L.A.F."/>
            <person name="Takita M.A."/>
            <person name="Tamura R.E."/>
            <person name="Teixeira E.C."/>
            <person name="Tezza R.I.D."/>
            <person name="Trindade dos Santos M."/>
            <person name="Truffi D."/>
            <person name="Tsai S.M."/>
            <person name="White F.F."/>
            <person name="Setubal J.C."/>
            <person name="Kitajima J.P."/>
        </authorList>
    </citation>
    <scope>NUCLEOTIDE SEQUENCE [LARGE SCALE GENOMIC DNA]</scope>
    <source>
        <strain>306</strain>
    </source>
</reference>
<organism>
    <name type="scientific">Xanthomonas axonopodis pv. citri (strain 306)</name>
    <dbReference type="NCBI Taxonomy" id="190486"/>
    <lineage>
        <taxon>Bacteria</taxon>
        <taxon>Pseudomonadati</taxon>
        <taxon>Pseudomonadota</taxon>
        <taxon>Gammaproteobacteria</taxon>
        <taxon>Lysobacterales</taxon>
        <taxon>Lysobacteraceae</taxon>
        <taxon>Xanthomonas</taxon>
    </lineage>
</organism>
<sequence length="345" mass="37494">MSKRGTRTPGYWYDNTPIPLPARILAPVYGAAIALRRALYRRGWRRRHGVPVPVIVVGNVTAGGTGKTPLTIALVAKLQEAGWTPGVASRGYGRDDAGTARWVEADTPVALGGDEPVLIAWKTGARVRVDSDRLAAARALVEAGCDIVICDDGLQHYRLARDVEIEVVDGQRRYGNGRLLPAGPLREPAARAQDCDFRVVNLGQASATATPQAPDDAGFGKWQMRLSIDSVQPMDGKRAQPLSMLAGQRVHAVAGIAHPERFFAMLRARGIGVVPHAFADHHVYRAADFSFGSRLPVLMTEKDAVKCRPFADEWLYSVPLKAELPAAFWVSLLDRLNKLASRQGV</sequence>
<keyword id="KW-0067">ATP-binding</keyword>
<keyword id="KW-0418">Kinase</keyword>
<keyword id="KW-0441">Lipid A biosynthesis</keyword>
<keyword id="KW-0444">Lipid biosynthesis</keyword>
<keyword id="KW-0443">Lipid metabolism</keyword>
<keyword id="KW-0547">Nucleotide-binding</keyword>
<keyword id="KW-0808">Transferase</keyword>
<protein>
    <recommendedName>
        <fullName evidence="1">Tetraacyldisaccharide 4'-kinase</fullName>
        <ecNumber evidence="1">2.7.1.130</ecNumber>
    </recommendedName>
    <alternativeName>
        <fullName evidence="1">Lipid A 4'-kinase</fullName>
    </alternativeName>
</protein>
<comment type="function">
    <text evidence="1">Transfers the gamma-phosphate of ATP to the 4'-position of a tetraacyldisaccharide 1-phosphate intermediate (termed DS-1-P) to form tetraacyldisaccharide 1,4'-bis-phosphate (lipid IVA).</text>
</comment>
<comment type="catalytic activity">
    <reaction evidence="1">
        <text>a lipid A disaccharide + ATP = a lipid IVA + ADP + H(+)</text>
        <dbReference type="Rhea" id="RHEA:67840"/>
        <dbReference type="ChEBI" id="CHEBI:15378"/>
        <dbReference type="ChEBI" id="CHEBI:30616"/>
        <dbReference type="ChEBI" id="CHEBI:176343"/>
        <dbReference type="ChEBI" id="CHEBI:176425"/>
        <dbReference type="ChEBI" id="CHEBI:456216"/>
        <dbReference type="EC" id="2.7.1.130"/>
    </reaction>
</comment>
<comment type="pathway">
    <text evidence="1">Glycolipid biosynthesis; lipid IV(A) biosynthesis; lipid IV(A) from (3R)-3-hydroxytetradecanoyl-[acyl-carrier-protein] and UDP-N-acetyl-alpha-D-glucosamine: step 6/6.</text>
</comment>
<comment type="similarity">
    <text evidence="1">Belongs to the LpxK family.</text>
</comment>
<feature type="chain" id="PRO_0000190958" description="Tetraacyldisaccharide 4'-kinase">
    <location>
        <begin position="1"/>
        <end position="345"/>
    </location>
</feature>
<feature type="binding site" evidence="1">
    <location>
        <begin position="61"/>
        <end position="68"/>
    </location>
    <ligand>
        <name>ATP</name>
        <dbReference type="ChEBI" id="CHEBI:30616"/>
    </ligand>
</feature>
<proteinExistence type="inferred from homology"/>